<keyword id="KW-0002">3D-structure</keyword>
<keyword id="KW-0010">Activator</keyword>
<keyword id="KW-0025">Alternative splicing</keyword>
<keyword id="KW-0903">Direct protein sequencing</keyword>
<keyword id="KW-0539">Nucleus</keyword>
<keyword id="KW-0597">Phosphoprotein</keyword>
<keyword id="KW-1267">Proteomics identification</keyword>
<keyword id="KW-1185">Reference proteome</keyword>
<keyword id="KW-0804">Transcription</keyword>
<keyword id="KW-0805">Transcription regulation</keyword>
<comment type="function">
    <text>Component of the Mediator complex, a coactivator involved in the regulated transcription of nearly all RNA polymerase II-dependent genes. Mediator functions as a bridge to convey information from gene-specific regulatory proteins to the basal RNA polymerase II transcription machinery. Mediator is recruited to promoters by direct interactions with regulatory proteins and serves as a scaffold for the assembly of a functional pre-initiation complex with RNA polymerase II and the general transcription factors.</text>
</comment>
<comment type="subunit">
    <text evidence="3 4 5 6">Component of the Mediator complex, which is composed of MED1, MED4, MED6, MED7, MED8, MED9, MED10, MED11, MED12, MED13, MED13L, MED14, MED15, MED16, MED17, MED18, MED19, MED20, MED21, MED22, MED23, MED24, MED25, MED26, MED27, MED29, MED30, MED31, CCNC, CDK8 and CDC2L6/CDK11. The MED12, MED13, CCNC and CDK8 subunits form a distinct module termed the CDK8 module. Mediator containing the CDK8 module is less active than Mediator lacking this module in supporting transcriptional activation. Individual preparations of the Mediator complex lacking one or more distinct subunits have been variously termed ARC, CRSP, DRIP, PC2, SMCC and TRAP. Interacts with CEBPB (when not methylated) (PubMed:20111005).</text>
</comment>
<comment type="interaction">
    <interactant intactId="EBI-394392">
        <id>O95402</id>
    </interactant>
    <interactant intactId="EBI-769261">
        <id>Q96JC9</id>
        <label>EAF1</label>
    </interactant>
    <organismsDiffer>false</organismsDiffer>
    <experiments>5</experiments>
</comment>
<comment type="interaction">
    <interactant intactId="EBI-394392">
        <id>O95402</id>
    </interactant>
    <interactant intactId="EBI-394607">
        <id>Q9NPJ6</id>
        <label>MED4</label>
    </interactant>
    <organismsDiffer>false</organismsDiffer>
    <experiments>15</experiments>
</comment>
<comment type="interaction">
    <interactant intactId="EBI-394392">
        <id>O95402</id>
    </interactant>
    <interactant intactId="EBI-394632">
        <id>O43513</id>
        <label>MED7</label>
    </interactant>
    <organismsDiffer>false</organismsDiffer>
    <experiments>10</experiments>
</comment>
<comment type="interaction">
    <interactant intactId="EBI-394392">
        <id>O95402</id>
    </interactant>
    <interactant intactId="EBI-398761">
        <id>Q8C1S0</id>
        <label>Med19</label>
    </interactant>
    <organismsDiffer>true</organismsDiffer>
    <experiments>2</experiments>
</comment>
<comment type="subcellular location">
    <subcellularLocation>
        <location evidence="8">Nucleus</location>
    </subcellularLocation>
</comment>
<comment type="alternative products">
    <event type="alternative splicing"/>
    <isoform>
        <id>O95402-1</id>
        <name>1</name>
        <sequence type="displayed"/>
    </isoform>
    <isoform>
        <id>O95402-2</id>
        <name>2</name>
        <sequence type="described" ref="VSP_028151 VSP_028152"/>
    </isoform>
</comment>
<comment type="similarity">
    <text evidence="8">Belongs to the Mediator complex subunit 26 family.</text>
</comment>
<gene>
    <name type="primary">MED26</name>
    <name type="synonym">ARC70</name>
    <name type="synonym">CRSP7</name>
</gene>
<dbReference type="EMBL" id="AF104253">
    <property type="protein sequence ID" value="AAD12722.1"/>
    <property type="molecule type" value="mRNA"/>
</dbReference>
<dbReference type="EMBL" id="BC110430">
    <property type="protein sequence ID" value="AAI10431.1"/>
    <property type="molecule type" value="mRNA"/>
</dbReference>
<dbReference type="EMBL" id="BC127215">
    <property type="protein sequence ID" value="AAI27216.1"/>
    <property type="molecule type" value="mRNA"/>
</dbReference>
<dbReference type="CCDS" id="CCDS12347.1">
    <molecule id="O95402-1"/>
</dbReference>
<dbReference type="RefSeq" id="NP_004822.2">
    <molecule id="O95402-1"/>
    <property type="nucleotide sequence ID" value="NM_004831.3"/>
</dbReference>
<dbReference type="PDB" id="5ODD">
    <property type="method" value="NMR"/>
    <property type="chains" value="A=1-92"/>
</dbReference>
<dbReference type="PDB" id="6ZV3">
    <property type="method" value="NMR"/>
    <property type="chains" value="A=1-87"/>
</dbReference>
<dbReference type="PDB" id="7EMF">
    <property type="method" value="EM"/>
    <property type="resolution" value="3.50 A"/>
    <property type="chains" value="Z=1-600"/>
</dbReference>
<dbReference type="PDB" id="7ENA">
    <property type="method" value="EM"/>
    <property type="resolution" value="4.07 A"/>
    <property type="chains" value="z=1-600"/>
</dbReference>
<dbReference type="PDB" id="7ENC">
    <property type="method" value="EM"/>
    <property type="resolution" value="4.13 A"/>
    <property type="chains" value="z=1-600"/>
</dbReference>
<dbReference type="PDB" id="7ENJ">
    <property type="method" value="EM"/>
    <property type="resolution" value="4.40 A"/>
    <property type="chains" value="Z=1-600"/>
</dbReference>
<dbReference type="PDB" id="8GXQ">
    <property type="method" value="EM"/>
    <property type="resolution" value="5.04 A"/>
    <property type="chains" value="z=1-600"/>
</dbReference>
<dbReference type="PDB" id="8GXS">
    <property type="method" value="EM"/>
    <property type="resolution" value="4.16 A"/>
    <property type="chains" value="z=1-600"/>
</dbReference>
<dbReference type="PDBsum" id="5ODD"/>
<dbReference type="PDBsum" id="6ZV3"/>
<dbReference type="PDBsum" id="7EMF"/>
<dbReference type="PDBsum" id="7ENA"/>
<dbReference type="PDBsum" id="7ENC"/>
<dbReference type="PDBsum" id="7ENJ"/>
<dbReference type="PDBsum" id="8GXQ"/>
<dbReference type="PDBsum" id="8GXS"/>
<dbReference type="EMDB" id="EMD-31191"/>
<dbReference type="EMDB" id="EMD-31204"/>
<dbReference type="EMDB" id="EMD-31207"/>
<dbReference type="EMDB" id="EMD-31211"/>
<dbReference type="EMDB" id="EMD-34359"/>
<dbReference type="EMDB" id="EMD-34360"/>
<dbReference type="SMR" id="O95402"/>
<dbReference type="BioGRID" id="114831">
    <property type="interactions" value="106"/>
</dbReference>
<dbReference type="ComplexPortal" id="CPX-3227">
    <property type="entry name" value="Core mediator complex"/>
</dbReference>
<dbReference type="CORUM" id="O95402"/>
<dbReference type="DIP" id="DIP-31464N"/>
<dbReference type="FunCoup" id="O95402">
    <property type="interactions" value="2593"/>
</dbReference>
<dbReference type="IntAct" id="O95402">
    <property type="interactions" value="97"/>
</dbReference>
<dbReference type="MINT" id="O95402"/>
<dbReference type="STRING" id="9606.ENSP00000263390"/>
<dbReference type="iPTMnet" id="O95402"/>
<dbReference type="PhosphoSitePlus" id="O95402"/>
<dbReference type="BioMuta" id="MED26"/>
<dbReference type="jPOST" id="O95402"/>
<dbReference type="MassIVE" id="O95402"/>
<dbReference type="PaxDb" id="9606-ENSP00000263390"/>
<dbReference type="PeptideAtlas" id="O95402"/>
<dbReference type="ProteomicsDB" id="50854">
    <molecule id="O95402-1"/>
</dbReference>
<dbReference type="ProteomicsDB" id="50855">
    <molecule id="O95402-2"/>
</dbReference>
<dbReference type="Pumba" id="O95402"/>
<dbReference type="TopDownProteomics" id="O95402-1">
    <molecule id="O95402-1"/>
</dbReference>
<dbReference type="Antibodypedia" id="14206">
    <property type="antibodies" value="289 antibodies from 34 providers"/>
</dbReference>
<dbReference type="DNASU" id="9441"/>
<dbReference type="Ensembl" id="ENST00000263390.8">
    <molecule id="O95402-1"/>
    <property type="protein sequence ID" value="ENSP00000263390.3"/>
    <property type="gene ID" value="ENSG00000105085.11"/>
</dbReference>
<dbReference type="Ensembl" id="ENST00000611692.4">
    <molecule id="O95402-2"/>
    <property type="protein sequence ID" value="ENSP00000484490.1"/>
    <property type="gene ID" value="ENSG00000105085.11"/>
</dbReference>
<dbReference type="GeneID" id="9441"/>
<dbReference type="KEGG" id="hsa:9441"/>
<dbReference type="MANE-Select" id="ENST00000263390.8">
    <property type="protein sequence ID" value="ENSP00000263390.3"/>
    <property type="RefSeq nucleotide sequence ID" value="NM_004831.5"/>
    <property type="RefSeq protein sequence ID" value="NP_004822.2"/>
</dbReference>
<dbReference type="UCSC" id="uc002nen.2">
    <molecule id="O95402-1"/>
    <property type="organism name" value="human"/>
</dbReference>
<dbReference type="AGR" id="HGNC:2376"/>
<dbReference type="CTD" id="9441"/>
<dbReference type="DisGeNET" id="9441"/>
<dbReference type="GeneCards" id="MED26"/>
<dbReference type="HGNC" id="HGNC:2376">
    <property type="gene designation" value="MED26"/>
</dbReference>
<dbReference type="HPA" id="ENSG00000105085">
    <property type="expression patterns" value="Tissue enhanced (testis)"/>
</dbReference>
<dbReference type="MIM" id="605043">
    <property type="type" value="gene"/>
</dbReference>
<dbReference type="neXtProt" id="NX_O95402"/>
<dbReference type="OpenTargets" id="ENSG00000105085"/>
<dbReference type="PharmGKB" id="PA162395623"/>
<dbReference type="VEuPathDB" id="HostDB:ENSG00000105085"/>
<dbReference type="eggNOG" id="KOG1105">
    <property type="taxonomic scope" value="Eukaryota"/>
</dbReference>
<dbReference type="GeneTree" id="ENSGT00390000000259"/>
<dbReference type="HOGENOM" id="CLU_478915_0_0_1"/>
<dbReference type="InParanoid" id="O95402"/>
<dbReference type="OMA" id="SHSNQIC"/>
<dbReference type="OrthoDB" id="550309at2759"/>
<dbReference type="PAN-GO" id="O95402">
    <property type="GO annotations" value="5 GO annotations based on evolutionary models"/>
</dbReference>
<dbReference type="PhylomeDB" id="O95402"/>
<dbReference type="TreeFam" id="TF328436"/>
<dbReference type="PathwayCommons" id="O95402"/>
<dbReference type="Reactome" id="R-HSA-1989781">
    <property type="pathway name" value="PPARA activates gene expression"/>
</dbReference>
<dbReference type="Reactome" id="R-HSA-212436">
    <property type="pathway name" value="Generic Transcription Pathway"/>
</dbReference>
<dbReference type="Reactome" id="R-HSA-381340">
    <property type="pathway name" value="Transcriptional regulation of white adipocyte differentiation"/>
</dbReference>
<dbReference type="Reactome" id="R-HSA-9833110">
    <property type="pathway name" value="RSV-host interactions"/>
</dbReference>
<dbReference type="SignaLink" id="O95402"/>
<dbReference type="SIGNOR" id="O95402"/>
<dbReference type="BioGRID-ORCS" id="9441">
    <property type="hits" value="634 hits in 1161 CRISPR screens"/>
</dbReference>
<dbReference type="CD-CODE" id="6F24707C">
    <property type="entry name" value="Cajal body"/>
</dbReference>
<dbReference type="CD-CODE" id="DEE660B4">
    <property type="entry name" value="Stress granule"/>
</dbReference>
<dbReference type="ChiTaRS" id="MED26">
    <property type="organism name" value="human"/>
</dbReference>
<dbReference type="GeneWiki" id="MED26"/>
<dbReference type="GenomeRNAi" id="9441"/>
<dbReference type="Pharos" id="O95402">
    <property type="development level" value="Tbio"/>
</dbReference>
<dbReference type="PRO" id="PR:O95402"/>
<dbReference type="Proteomes" id="UP000005640">
    <property type="component" value="Chromosome 19"/>
</dbReference>
<dbReference type="RNAct" id="O95402">
    <property type="molecule type" value="protein"/>
</dbReference>
<dbReference type="Bgee" id="ENSG00000105085">
    <property type="expression patterns" value="Expressed in sperm and 192 other cell types or tissues"/>
</dbReference>
<dbReference type="ExpressionAtlas" id="O95402">
    <property type="expression patterns" value="baseline and differential"/>
</dbReference>
<dbReference type="GO" id="GO:0070847">
    <property type="term" value="C:core mediator complex"/>
    <property type="evidence" value="ECO:0000353"/>
    <property type="project" value="ComplexPortal"/>
</dbReference>
<dbReference type="GO" id="GO:0016592">
    <property type="term" value="C:mediator complex"/>
    <property type="evidence" value="ECO:0000314"/>
    <property type="project" value="UniProtKB"/>
</dbReference>
<dbReference type="GO" id="GO:0005654">
    <property type="term" value="C:nucleoplasm"/>
    <property type="evidence" value="ECO:0000304"/>
    <property type="project" value="Reactome"/>
</dbReference>
<dbReference type="GO" id="GO:0005634">
    <property type="term" value="C:nucleus"/>
    <property type="evidence" value="ECO:0000314"/>
    <property type="project" value="ComplexPortal"/>
</dbReference>
<dbReference type="GO" id="GO:0003713">
    <property type="term" value="F:transcription coactivator activity"/>
    <property type="evidence" value="ECO:0000304"/>
    <property type="project" value="ProtInc"/>
</dbReference>
<dbReference type="GO" id="GO:0003712">
    <property type="term" value="F:transcription coregulator activity"/>
    <property type="evidence" value="ECO:0000314"/>
    <property type="project" value="UniProtKB"/>
</dbReference>
<dbReference type="GO" id="GO:0010628">
    <property type="term" value="P:positive regulation of gene expression"/>
    <property type="evidence" value="ECO:0000318"/>
    <property type="project" value="GO_Central"/>
</dbReference>
<dbReference type="GO" id="GO:0032968">
    <property type="term" value="P:positive regulation of transcription elongation by RNA polymerase II"/>
    <property type="evidence" value="ECO:0000303"/>
    <property type="project" value="ComplexPortal"/>
</dbReference>
<dbReference type="GO" id="GO:0060261">
    <property type="term" value="P:positive regulation of transcription initiation by RNA polymerase II"/>
    <property type="evidence" value="ECO:0000303"/>
    <property type="project" value="ComplexPortal"/>
</dbReference>
<dbReference type="GO" id="GO:0006357">
    <property type="term" value="P:regulation of transcription by RNA polymerase II"/>
    <property type="evidence" value="ECO:0000314"/>
    <property type="project" value="UniProtKB"/>
</dbReference>
<dbReference type="GO" id="GO:0051123">
    <property type="term" value="P:RNA polymerase II preinitiation complex assembly"/>
    <property type="evidence" value="ECO:0000303"/>
    <property type="project" value="ComplexPortal"/>
</dbReference>
<dbReference type="GO" id="GO:0006367">
    <property type="term" value="P:transcription initiation at RNA polymerase II promoter"/>
    <property type="evidence" value="ECO:0000304"/>
    <property type="project" value="ProtInc"/>
</dbReference>
<dbReference type="CDD" id="cd00183">
    <property type="entry name" value="TFIIS_I"/>
    <property type="match status" value="1"/>
</dbReference>
<dbReference type="FunFam" id="1.20.930.10:FF:000008">
    <property type="entry name" value="mediator of RNA polymerase II transcription subunit 26"/>
    <property type="match status" value="1"/>
</dbReference>
<dbReference type="Gene3D" id="1.20.930.10">
    <property type="entry name" value="Conserved domain common to transcription factors TFIIS, elongin A, CRSP70"/>
    <property type="match status" value="1"/>
</dbReference>
<dbReference type="InterPro" id="IPR042376">
    <property type="entry name" value="MED26"/>
</dbReference>
<dbReference type="InterPro" id="IPR031416">
    <property type="entry name" value="Med26_C"/>
</dbReference>
<dbReference type="InterPro" id="IPR031417">
    <property type="entry name" value="Med26_Mid"/>
</dbReference>
<dbReference type="InterPro" id="IPR003617">
    <property type="entry name" value="TFIIS/CRSP70_N_sub"/>
</dbReference>
<dbReference type="InterPro" id="IPR035441">
    <property type="entry name" value="TFIIS/LEDGF_dom_sf"/>
</dbReference>
<dbReference type="InterPro" id="IPR017923">
    <property type="entry name" value="TFIIS_N"/>
</dbReference>
<dbReference type="PANTHER" id="PTHR15201">
    <property type="entry name" value="CRSP70"/>
    <property type="match status" value="1"/>
</dbReference>
<dbReference type="PANTHER" id="PTHR15201:SF1">
    <property type="entry name" value="MEDIATOR OF RNA POLYMERASE II TRANSCRIPTION SUBUNIT 26"/>
    <property type="match status" value="1"/>
</dbReference>
<dbReference type="Pfam" id="PF08711">
    <property type="entry name" value="Med26"/>
    <property type="match status" value="1"/>
</dbReference>
<dbReference type="Pfam" id="PF15693">
    <property type="entry name" value="Med26_C"/>
    <property type="match status" value="1"/>
</dbReference>
<dbReference type="Pfam" id="PF15694">
    <property type="entry name" value="Med26_M"/>
    <property type="match status" value="1"/>
</dbReference>
<dbReference type="SMART" id="SM00509">
    <property type="entry name" value="TFS2N"/>
    <property type="match status" value="1"/>
</dbReference>
<dbReference type="SUPFAM" id="SSF47676">
    <property type="entry name" value="Conserved domain common to transcription factors TFIIS, elongin A, CRSP70"/>
    <property type="match status" value="1"/>
</dbReference>
<dbReference type="PROSITE" id="PS51319">
    <property type="entry name" value="TFIIS_N"/>
    <property type="match status" value="1"/>
</dbReference>
<sequence length="600" mass="65446">MTAAPASPQQIRDRLLQAIDPQSNIRNMVAVLEVISSLEKYPITKEALEETRLGKLINDVRKKTKNEELAKRAKKLLRSWQKLIEPAHQHEAALRGLAGATGSANGGAHNCRPEVGAAGPPRSIHDLKSRNDLQRLPGQRLDRLGSRKRRGDQRDLGHPGPPPKVSKASHDPLVPNSSPLPTNGISGSPESFASSLDGSGHAGPEGSRLERDENDKHSGKIPVNAVRPHTSSPGLGKPPGPCLQPKASVLQQLDRVDETPGPPHPKGPPRCSFSPRNSRHEGSFARQQSLYAPKGSVPSPSPRPQALDATQVPSPLPLAQPSTPPVRRLELLPSAESPVCWLEQPESHQRLAGPGCKAGLSPAEPLLSRAGFSPDSSKADSDAASSGGSDSKKKKRYRPRDYTVNLDGQVAEAGVKPVRLKERKLTFDPMTRQIKPLTQKEPVRADSPVHMEQQSRTELDKQEAKASLQSPFEQTNWKELSRNEIIQSYLSRQSSLLSSSGAQTPGAHHFMSEYLKQEESTRQGARQLHVLVPQSPPTDLPGLTREVTQDDLDRIQASQWPGVNGCQDTQGNWYDWTQCISLDPHGDDGRLNILPYVCLD</sequence>
<accession>O95402</accession>
<accession>A1A4S3</accession>
<accession>Q0VGB6</accession>
<reference key="1">
    <citation type="journal article" date="1999" name="Nature">
        <title>The transcriptional cofactor complex CRSP is required for activity of the enhancer-binding protein Sp1.</title>
        <authorList>
            <person name="Ryu S."/>
            <person name="Zhou S."/>
            <person name="Ladurner A.G."/>
            <person name="Tjian R."/>
        </authorList>
    </citation>
    <scope>NUCLEOTIDE SEQUENCE [MRNA] (ISOFORM 1)</scope>
</reference>
<reference key="2">
    <citation type="journal article" date="2004" name="Genome Res.">
        <title>The status, quality, and expansion of the NIH full-length cDNA project: the Mammalian Gene Collection (MGC).</title>
        <authorList>
            <consortium name="The MGC Project Team"/>
        </authorList>
    </citation>
    <scope>NUCLEOTIDE SEQUENCE [LARGE SCALE MRNA] (ISOFORMS 1 AND 2)</scope>
    <source>
        <tissue>Uterus</tissue>
    </source>
</reference>
<reference key="3">
    <citation type="journal article" date="1999" name="Nature">
        <title>Composite co-activator ARC mediates chromatin-directed transcriptional activation.</title>
        <authorList>
            <person name="Naeaer A.M."/>
            <person name="Beaurang P.A."/>
            <person name="Zhou S."/>
            <person name="Abraham S."/>
            <person name="Solomon W.B."/>
            <person name="Tjian R."/>
        </authorList>
    </citation>
    <scope>IDENTIFICATION IN ARC COMPLEX</scope>
    <scope>PROTEIN SEQUENCE OF 294-305 AND 478-489</scope>
</reference>
<reference key="4">
    <citation type="journal article" date="2004" name="Mol. Cell">
        <title>A set of consensus mammalian mediator subunits identified by multidimensional protein identification technology.</title>
        <authorList>
            <person name="Sato S."/>
            <person name="Tomomori-Sato C."/>
            <person name="Parmely T.J."/>
            <person name="Florens L."/>
            <person name="Zybailov B."/>
            <person name="Swanson S.K."/>
            <person name="Banks C.A.S."/>
            <person name="Jin J."/>
            <person name="Cai Y."/>
            <person name="Washburn M.P."/>
            <person name="Conaway J.W."/>
            <person name="Conaway R.C."/>
        </authorList>
    </citation>
    <scope>IDENTIFICATION BY MASS SPECTROMETRY</scope>
    <scope>IDENTIFICATION IN THE MEDIATOR COMPLEX</scope>
</reference>
<reference key="5">
    <citation type="journal article" date="2005" name="Mol. Cell">
        <title>MED1/TRAP220 exists predominantly in a TRAP/Mediator subpopulation enriched in RNA polymerase II and is required for ER-mediated transcription.</title>
        <authorList>
            <person name="Zhang X."/>
            <person name="Krutchinsky A."/>
            <person name="Fukuda A."/>
            <person name="Chen W."/>
            <person name="Yamamura S."/>
            <person name="Chait B.T."/>
            <person name="Roeder R.G."/>
        </authorList>
    </citation>
    <scope>INTERACTION WITH MED1 AND MED10</scope>
    <scope>IDENTIFICATION BY MASS SPECTROMETRY</scope>
    <scope>IDENTIFICATION IN THE MEDIATOR COMPLEX</scope>
    <scope>ASSOCIATION OF THE MEDIATOR COMPLEX WITH RNA POLYMERASE II</scope>
</reference>
<reference key="6">
    <citation type="journal article" date="2010" name="EMBO J.">
        <title>Crosstalk between C/EBPbeta phosphorylation, arginine methylation, and SWI/SNF/Mediator implies an indexing transcription factor code.</title>
        <authorList>
            <person name="Kowenz-Leutz E."/>
            <person name="Pless O."/>
            <person name="Dittmar G."/>
            <person name="Knoblich M."/>
            <person name="Leutz A."/>
        </authorList>
    </citation>
    <scope>INTERACTION WITH CEBPB</scope>
</reference>
<reference key="7">
    <citation type="journal article" date="2013" name="J. Proteome Res.">
        <title>Toward a comprehensive characterization of a human cancer cell phosphoproteome.</title>
        <authorList>
            <person name="Zhou H."/>
            <person name="Di Palma S."/>
            <person name="Preisinger C."/>
            <person name="Peng M."/>
            <person name="Polat A.N."/>
            <person name="Heck A.J."/>
            <person name="Mohammed S."/>
        </authorList>
    </citation>
    <scope>PHOSPHORYLATION [LARGE SCALE ANALYSIS] AT SER-447; SER-470 AND SER-535</scope>
    <scope>IDENTIFICATION BY MASS SPECTROMETRY [LARGE SCALE ANALYSIS]</scope>
    <source>
        <tissue>Cervix carcinoma</tissue>
        <tissue>Erythroleukemia</tissue>
    </source>
</reference>
<reference key="8">
    <citation type="journal article" date="2016" name="Biomol. NMR. Assign.">
        <title>1H, 15N and 13C assignments of the N-terminal domain of the Mediator complex subunit MED26.</title>
        <authorList>
            <person name="Peruzzini R."/>
            <person name="Lens Z."/>
            <person name="Verger A."/>
            <person name="Dewitte F."/>
            <person name="Ferreira E."/>
            <person name="Baert J.L."/>
            <person name="Villeret V."/>
            <person name="Landrieu I."/>
            <person name="Cantrelle F.X."/>
        </authorList>
    </citation>
    <scope>STRUCTURE BY NMR OF 1-92</scope>
</reference>
<feature type="chain" id="PRO_0000079360" description="Mediator of RNA polymerase II transcription subunit 26">
    <location>
        <begin position="1"/>
        <end position="600"/>
    </location>
</feature>
<feature type="domain" description="TFIIS N-terminal" evidence="1">
    <location>
        <begin position="10"/>
        <end position="87"/>
    </location>
</feature>
<feature type="region of interest" description="Disordered" evidence="2">
    <location>
        <begin position="99"/>
        <end position="330"/>
    </location>
</feature>
<feature type="region of interest" description="Disordered" evidence="2">
    <location>
        <begin position="348"/>
        <end position="402"/>
    </location>
</feature>
<feature type="region of interest" description="Disordered" evidence="2">
    <location>
        <begin position="431"/>
        <end position="461"/>
    </location>
</feature>
<feature type="compositionally biased region" description="Basic and acidic residues" evidence="2">
    <location>
        <begin position="123"/>
        <end position="133"/>
    </location>
</feature>
<feature type="compositionally biased region" description="Polar residues" evidence="2">
    <location>
        <begin position="175"/>
        <end position="197"/>
    </location>
</feature>
<feature type="compositionally biased region" description="Basic and acidic residues" evidence="2">
    <location>
        <begin position="207"/>
        <end position="218"/>
    </location>
</feature>
<feature type="compositionally biased region" description="Pro residues" evidence="2">
    <location>
        <begin position="314"/>
        <end position="324"/>
    </location>
</feature>
<feature type="compositionally biased region" description="Basic and acidic residues" evidence="2">
    <location>
        <begin position="441"/>
        <end position="461"/>
    </location>
</feature>
<feature type="modified residue" description="Phosphoserine" evidence="9">
    <location>
        <position position="447"/>
    </location>
</feature>
<feature type="modified residue" description="Phosphoserine" evidence="9">
    <location>
        <position position="470"/>
    </location>
</feature>
<feature type="modified residue" description="Phosphoserine" evidence="9">
    <location>
        <position position="535"/>
    </location>
</feature>
<feature type="splice variant" id="VSP_028151" description="In isoform 2." evidence="7">
    <original>LLRSWQKLIEPAHQHEA</original>
    <variation>LPGWQWACRPRGQPPGA</variation>
    <location>
        <begin position="76"/>
        <end position="92"/>
    </location>
</feature>
<feature type="splice variant" id="VSP_028152" description="In isoform 2." evidence="7">
    <location>
        <begin position="93"/>
        <end position="600"/>
    </location>
</feature>
<feature type="sequence conflict" description="In Ref. 1; AAD12722." evidence="8" ref="1">
    <original>L</original>
    <variation>F</variation>
    <location>
        <position position="156"/>
    </location>
</feature>
<feature type="sequence conflict" description="In Ref. 2; AAI27216." evidence="8" ref="2">
    <original>P</original>
    <variation>A</variation>
    <location>
        <position position="241"/>
    </location>
</feature>
<feature type="sequence conflict" description="In Ref. 2; AAI10431." evidence="8" ref="2">
    <original>R</original>
    <variation>L</variation>
    <location>
        <position position="369"/>
    </location>
</feature>
<feature type="helix" evidence="10">
    <location>
        <begin position="8"/>
        <end position="18"/>
    </location>
</feature>
<feature type="helix" evidence="10">
    <location>
        <begin position="28"/>
        <end position="40"/>
    </location>
</feature>
<feature type="helix" evidence="10">
    <location>
        <begin position="45"/>
        <end position="50"/>
    </location>
</feature>
<feature type="turn" evidence="10">
    <location>
        <begin position="51"/>
        <end position="53"/>
    </location>
</feature>
<feature type="helix" evidence="10">
    <location>
        <begin position="54"/>
        <end position="63"/>
    </location>
</feature>
<feature type="helix" evidence="10">
    <location>
        <begin position="67"/>
        <end position="81"/>
    </location>
</feature>
<feature type="turn" evidence="10">
    <location>
        <begin position="82"/>
        <end position="84"/>
    </location>
</feature>
<feature type="helix" evidence="11">
    <location>
        <begin position="485"/>
        <end position="499"/>
    </location>
</feature>
<feature type="turn" evidence="11">
    <location>
        <begin position="539"/>
        <end position="542"/>
    </location>
</feature>
<feature type="helix" evidence="11">
    <location>
        <begin position="550"/>
        <end position="556"/>
    </location>
</feature>
<feature type="turn" evidence="11">
    <location>
        <begin position="561"/>
        <end position="564"/>
    </location>
</feature>
<feature type="strand" evidence="11">
    <location>
        <begin position="580"/>
        <end position="582"/>
    </location>
</feature>
<feature type="strand" evidence="11">
    <location>
        <begin position="585"/>
        <end position="588"/>
    </location>
</feature>
<feature type="strand" evidence="11">
    <location>
        <begin position="591"/>
        <end position="593"/>
    </location>
</feature>
<protein>
    <recommendedName>
        <fullName>Mediator of RNA polymerase II transcription subunit 26</fullName>
    </recommendedName>
    <alternativeName>
        <fullName>Activator-recruited cofactor 70 kDa component</fullName>
        <shortName>ARC70</shortName>
    </alternativeName>
    <alternativeName>
        <fullName>Cofactor required for Sp1 transcriptional activation subunit 7</fullName>
        <shortName>CRSP complex subunit 7</shortName>
    </alternativeName>
    <alternativeName>
        <fullName>Mediator complex subunit 26</fullName>
    </alternativeName>
    <alternativeName>
        <fullName>Transcriptional coactivator CRSP70</fullName>
    </alternativeName>
</protein>
<organism>
    <name type="scientific">Homo sapiens</name>
    <name type="common">Human</name>
    <dbReference type="NCBI Taxonomy" id="9606"/>
    <lineage>
        <taxon>Eukaryota</taxon>
        <taxon>Metazoa</taxon>
        <taxon>Chordata</taxon>
        <taxon>Craniata</taxon>
        <taxon>Vertebrata</taxon>
        <taxon>Euteleostomi</taxon>
        <taxon>Mammalia</taxon>
        <taxon>Eutheria</taxon>
        <taxon>Euarchontoglires</taxon>
        <taxon>Primates</taxon>
        <taxon>Haplorrhini</taxon>
        <taxon>Catarrhini</taxon>
        <taxon>Hominidae</taxon>
        <taxon>Homo</taxon>
    </lineage>
</organism>
<evidence type="ECO:0000255" key="1">
    <source>
        <dbReference type="PROSITE-ProRule" id="PRU00649"/>
    </source>
</evidence>
<evidence type="ECO:0000256" key="2">
    <source>
        <dbReference type="SAM" id="MobiDB-lite"/>
    </source>
</evidence>
<evidence type="ECO:0000269" key="3">
    <source>
    </source>
</evidence>
<evidence type="ECO:0000269" key="4">
    <source>
    </source>
</evidence>
<evidence type="ECO:0000269" key="5">
    <source>
    </source>
</evidence>
<evidence type="ECO:0000269" key="6">
    <source>
    </source>
</evidence>
<evidence type="ECO:0000303" key="7">
    <source>
    </source>
</evidence>
<evidence type="ECO:0000305" key="8"/>
<evidence type="ECO:0007744" key="9">
    <source>
    </source>
</evidence>
<evidence type="ECO:0007829" key="10">
    <source>
        <dbReference type="PDB" id="5ODD"/>
    </source>
</evidence>
<evidence type="ECO:0007829" key="11">
    <source>
        <dbReference type="PDB" id="7EMF"/>
    </source>
</evidence>
<name>MED26_HUMAN</name>
<proteinExistence type="evidence at protein level"/>